<accession>B7MVU2</accession>
<name>NUDL_ECO81</name>
<reference key="1">
    <citation type="journal article" date="2009" name="PLoS Genet.">
        <title>Organised genome dynamics in the Escherichia coli species results in highly diverse adaptive paths.</title>
        <authorList>
            <person name="Touchon M."/>
            <person name="Hoede C."/>
            <person name="Tenaillon O."/>
            <person name="Barbe V."/>
            <person name="Baeriswyl S."/>
            <person name="Bidet P."/>
            <person name="Bingen E."/>
            <person name="Bonacorsi S."/>
            <person name="Bouchier C."/>
            <person name="Bouvet O."/>
            <person name="Calteau A."/>
            <person name="Chiapello H."/>
            <person name="Clermont O."/>
            <person name="Cruveiller S."/>
            <person name="Danchin A."/>
            <person name="Diard M."/>
            <person name="Dossat C."/>
            <person name="Karoui M.E."/>
            <person name="Frapy E."/>
            <person name="Garry L."/>
            <person name="Ghigo J.M."/>
            <person name="Gilles A.M."/>
            <person name="Johnson J."/>
            <person name="Le Bouguenec C."/>
            <person name="Lescat M."/>
            <person name="Mangenot S."/>
            <person name="Martinez-Jehanne V."/>
            <person name="Matic I."/>
            <person name="Nassif X."/>
            <person name="Oztas S."/>
            <person name="Petit M.A."/>
            <person name="Pichon C."/>
            <person name="Rouy Z."/>
            <person name="Ruf C.S."/>
            <person name="Schneider D."/>
            <person name="Tourret J."/>
            <person name="Vacherie B."/>
            <person name="Vallenet D."/>
            <person name="Medigue C."/>
            <person name="Rocha E.P.C."/>
            <person name="Denamur E."/>
        </authorList>
    </citation>
    <scope>NUCLEOTIDE SEQUENCE [LARGE SCALE GENOMIC DNA]</scope>
    <source>
        <strain>ED1a</strain>
    </source>
</reference>
<organism>
    <name type="scientific">Escherichia coli O81 (strain ED1a)</name>
    <dbReference type="NCBI Taxonomy" id="585397"/>
    <lineage>
        <taxon>Bacteria</taxon>
        <taxon>Pseudomonadati</taxon>
        <taxon>Pseudomonadota</taxon>
        <taxon>Gammaproteobacteria</taxon>
        <taxon>Enterobacterales</taxon>
        <taxon>Enterobacteriaceae</taxon>
        <taxon>Escherichia</taxon>
    </lineage>
</organism>
<dbReference type="EC" id="3.6.1.-" evidence="1"/>
<dbReference type="EMBL" id="CU928162">
    <property type="protein sequence ID" value="CAR08208.2"/>
    <property type="molecule type" value="Genomic_DNA"/>
</dbReference>
<dbReference type="RefSeq" id="WP_000456725.1">
    <property type="nucleotide sequence ID" value="NC_011745.1"/>
</dbReference>
<dbReference type="SMR" id="B7MVU2"/>
<dbReference type="KEGG" id="ecq:ECED1_2016"/>
<dbReference type="HOGENOM" id="CLU_040940_5_2_6"/>
<dbReference type="Proteomes" id="UP000000748">
    <property type="component" value="Chromosome"/>
</dbReference>
<dbReference type="GO" id="GO:0010945">
    <property type="term" value="F:coenzyme A diphosphatase activity"/>
    <property type="evidence" value="ECO:0007669"/>
    <property type="project" value="InterPro"/>
</dbReference>
<dbReference type="GO" id="GO:0000287">
    <property type="term" value="F:magnesium ion binding"/>
    <property type="evidence" value="ECO:0007669"/>
    <property type="project" value="UniProtKB-UniRule"/>
</dbReference>
<dbReference type="GO" id="GO:0030145">
    <property type="term" value="F:manganese ion binding"/>
    <property type="evidence" value="ECO:0007669"/>
    <property type="project" value="UniProtKB-UniRule"/>
</dbReference>
<dbReference type="GO" id="GO:0009132">
    <property type="term" value="P:nucleoside diphosphate metabolic process"/>
    <property type="evidence" value="ECO:0007669"/>
    <property type="project" value="InterPro"/>
</dbReference>
<dbReference type="CDD" id="cd03426">
    <property type="entry name" value="NUDIX_CoAse_Nudt7"/>
    <property type="match status" value="1"/>
</dbReference>
<dbReference type="FunFam" id="3.90.79.10:FF:000013">
    <property type="entry name" value="Uncharacterized Nudix hydrolase NudL"/>
    <property type="match status" value="1"/>
</dbReference>
<dbReference type="Gene3D" id="3.90.79.10">
    <property type="entry name" value="Nucleoside Triphosphate Pyrophosphohydrolase"/>
    <property type="match status" value="1"/>
</dbReference>
<dbReference type="HAMAP" id="MF_01592">
    <property type="entry name" value="Nudix_NudL"/>
    <property type="match status" value="1"/>
</dbReference>
<dbReference type="InterPro" id="IPR045121">
    <property type="entry name" value="CoAse"/>
</dbReference>
<dbReference type="InterPro" id="IPR015797">
    <property type="entry name" value="NUDIX_hydrolase-like_dom_sf"/>
</dbReference>
<dbReference type="InterPro" id="IPR000086">
    <property type="entry name" value="NUDIX_hydrolase_dom"/>
</dbReference>
<dbReference type="InterPro" id="IPR000059">
    <property type="entry name" value="NUDIX_hydrolase_NudL_CS"/>
</dbReference>
<dbReference type="InterPro" id="IPR023735">
    <property type="entry name" value="Nudix_NudL"/>
</dbReference>
<dbReference type="NCBIfam" id="NF007980">
    <property type="entry name" value="PRK10707.1"/>
    <property type="match status" value="1"/>
</dbReference>
<dbReference type="PANTHER" id="PTHR12992:SF11">
    <property type="entry name" value="MITOCHONDRIAL COENZYME A DIPHOSPHATASE NUDT8"/>
    <property type="match status" value="1"/>
</dbReference>
<dbReference type="PANTHER" id="PTHR12992">
    <property type="entry name" value="NUDIX HYDROLASE"/>
    <property type="match status" value="1"/>
</dbReference>
<dbReference type="Pfam" id="PF00293">
    <property type="entry name" value="NUDIX"/>
    <property type="match status" value="1"/>
</dbReference>
<dbReference type="SUPFAM" id="SSF55811">
    <property type="entry name" value="Nudix"/>
    <property type="match status" value="1"/>
</dbReference>
<dbReference type="PROSITE" id="PS51462">
    <property type="entry name" value="NUDIX"/>
    <property type="match status" value="1"/>
</dbReference>
<dbReference type="PROSITE" id="PS01293">
    <property type="entry name" value="NUDIX_COA"/>
    <property type="match status" value="1"/>
</dbReference>
<comment type="function">
    <text evidence="1">Probably mediates the hydrolysis of some nucleoside diphosphate derivatives.</text>
</comment>
<comment type="cofactor">
    <cofactor evidence="1">
        <name>Mn(2+)</name>
        <dbReference type="ChEBI" id="CHEBI:29035"/>
    </cofactor>
    <cofactor evidence="1">
        <name>Mg(2+)</name>
        <dbReference type="ChEBI" id="CHEBI:18420"/>
    </cofactor>
</comment>
<comment type="similarity">
    <text evidence="1">Belongs to the Nudix hydrolase family. PCD1 subfamily.</text>
</comment>
<evidence type="ECO:0000255" key="1">
    <source>
        <dbReference type="HAMAP-Rule" id="MF_01592"/>
    </source>
</evidence>
<protein>
    <recommendedName>
        <fullName evidence="1">Uncharacterized Nudix hydrolase NudL</fullName>
        <ecNumber evidence="1">3.6.1.-</ecNumber>
    </recommendedName>
</protein>
<feature type="chain" id="PRO_1000185704" description="Uncharacterized Nudix hydrolase NudL">
    <location>
        <begin position="1"/>
        <end position="192"/>
    </location>
</feature>
<feature type="domain" description="Nudix hydrolase" evidence="1">
    <location>
        <begin position="29"/>
        <end position="160"/>
    </location>
</feature>
<feature type="short sequence motif" description="Nudix box">
    <location>
        <begin position="67"/>
        <end position="89"/>
    </location>
</feature>
<feature type="binding site" evidence="1">
    <location>
        <position position="83"/>
    </location>
    <ligand>
        <name>Mg(2+)</name>
        <dbReference type="ChEBI" id="CHEBI:18420"/>
    </ligand>
</feature>
<feature type="binding site" evidence="1">
    <location>
        <position position="87"/>
    </location>
    <ligand>
        <name>Mg(2+)</name>
        <dbReference type="ChEBI" id="CHEBI:18420"/>
    </ligand>
</feature>
<sequence length="192" mass="21464">MEYRSLTLDDFLSRFQLLRPQINRETLNHRQAAVLIPIVRRPQPGLLLTQRSIHLRKHAGQVAFPGGAVDDTDASVIAAALREAEEEVAIPPSAVEVIGVLPPVDSVTGYQVTPVVGIIPPDLPYRASEDEVSAVFEMPLAQALHLGRYHPLDIYRRGDSHRVWLSWYEQYFVWGMTAGIIRELALQIGVKP</sequence>
<keyword id="KW-0378">Hydrolase</keyword>
<keyword id="KW-0460">Magnesium</keyword>
<keyword id="KW-0464">Manganese</keyword>
<keyword id="KW-0479">Metal-binding</keyword>
<proteinExistence type="inferred from homology"/>
<gene>
    <name evidence="1" type="primary">nudL</name>
    <name type="ordered locus">ECED1_2016</name>
</gene>